<reference key="1">
    <citation type="journal article" date="2006" name="J. Bacteriol.">
        <title>Complete genome sequence of Yersinia pestis strains Antiqua and Nepal516: evidence of gene reduction in an emerging pathogen.</title>
        <authorList>
            <person name="Chain P.S.G."/>
            <person name="Hu P."/>
            <person name="Malfatti S.A."/>
            <person name="Radnedge L."/>
            <person name="Larimer F."/>
            <person name="Vergez L.M."/>
            <person name="Worsham P."/>
            <person name="Chu M.C."/>
            <person name="Andersen G.L."/>
        </authorList>
    </citation>
    <scope>NUCLEOTIDE SEQUENCE [LARGE SCALE GENOMIC DNA]</scope>
    <source>
        <strain>Nepal516</strain>
    </source>
</reference>
<reference key="2">
    <citation type="submission" date="2009-04" db="EMBL/GenBank/DDBJ databases">
        <title>Yersinia pestis Nepal516A whole genome shotgun sequencing project.</title>
        <authorList>
            <person name="Plunkett G. III"/>
            <person name="Anderson B.D."/>
            <person name="Baumler D.J."/>
            <person name="Burland V."/>
            <person name="Cabot E.L."/>
            <person name="Glasner J.D."/>
            <person name="Mau B."/>
            <person name="Neeno-Eckwall E."/>
            <person name="Perna N.T."/>
            <person name="Munk A.C."/>
            <person name="Tapia R."/>
            <person name="Green L.D."/>
            <person name="Rogers Y.C."/>
            <person name="Detter J.C."/>
            <person name="Bruce D.C."/>
            <person name="Brettin T.S."/>
        </authorList>
    </citation>
    <scope>NUCLEOTIDE SEQUENCE [LARGE SCALE GENOMIC DNA]</scope>
    <source>
        <strain>Nepal516</strain>
    </source>
</reference>
<proteinExistence type="inferred from homology"/>
<protein>
    <recommendedName>
        <fullName evidence="1">UPF0301 protein YPN_3133</fullName>
    </recommendedName>
</protein>
<dbReference type="EMBL" id="CP000305">
    <property type="protein sequence ID" value="ABG19460.1"/>
    <property type="molecule type" value="Genomic_DNA"/>
</dbReference>
<dbReference type="EMBL" id="ACNQ01000017">
    <property type="protein sequence ID" value="EEO75629.1"/>
    <property type="molecule type" value="Genomic_DNA"/>
</dbReference>
<dbReference type="RefSeq" id="WP_002209977.1">
    <property type="nucleotide sequence ID" value="NZ_ACNQ01000017.1"/>
</dbReference>
<dbReference type="SMR" id="Q1CEX0"/>
<dbReference type="KEGG" id="ypn:YPN_3133"/>
<dbReference type="HOGENOM" id="CLU_057596_1_0_6"/>
<dbReference type="Proteomes" id="UP000008936">
    <property type="component" value="Chromosome"/>
</dbReference>
<dbReference type="GO" id="GO:0005829">
    <property type="term" value="C:cytosol"/>
    <property type="evidence" value="ECO:0007669"/>
    <property type="project" value="TreeGrafter"/>
</dbReference>
<dbReference type="Gene3D" id="3.40.1740.10">
    <property type="entry name" value="VC0467-like"/>
    <property type="match status" value="1"/>
</dbReference>
<dbReference type="Gene3D" id="3.30.70.1300">
    <property type="entry name" value="VC0467-like domains"/>
    <property type="match status" value="1"/>
</dbReference>
<dbReference type="HAMAP" id="MF_00758">
    <property type="entry name" value="UPF0301"/>
    <property type="match status" value="1"/>
</dbReference>
<dbReference type="InterPro" id="IPR003774">
    <property type="entry name" value="AlgH-like"/>
</dbReference>
<dbReference type="NCBIfam" id="NF001266">
    <property type="entry name" value="PRK00228.1-1"/>
    <property type="match status" value="1"/>
</dbReference>
<dbReference type="PANTHER" id="PTHR30327">
    <property type="entry name" value="UNCHARACTERIZED PROTEIN YQGE"/>
    <property type="match status" value="1"/>
</dbReference>
<dbReference type="PANTHER" id="PTHR30327:SF1">
    <property type="entry name" value="UPF0301 PROTEIN YQGE"/>
    <property type="match status" value="1"/>
</dbReference>
<dbReference type="Pfam" id="PF02622">
    <property type="entry name" value="DUF179"/>
    <property type="match status" value="1"/>
</dbReference>
<dbReference type="SUPFAM" id="SSF143456">
    <property type="entry name" value="VC0467-like"/>
    <property type="match status" value="1"/>
</dbReference>
<evidence type="ECO:0000255" key="1">
    <source>
        <dbReference type="HAMAP-Rule" id="MF_00758"/>
    </source>
</evidence>
<sequence>MNLQHHFLIAMPSLQDPQFKRSVIYICEHGEKGAMGLVINKPLEQLTVETILEKLKIKSPSRDPAIRLDNVVLAGGPLAEDRGFILHSPQEGFASSIHISPETMITTSKDVLETLGTSGQPKNLLVALGYASWRQGQLEQELLDNVWLTTEADTHILFNTPIAERWQAAANKLGINIFNIAPQAGHA</sequence>
<gene>
    <name type="ordered locus">YPN_3133</name>
    <name type="ORF">YP516_3560</name>
</gene>
<accession>Q1CEX0</accession>
<accession>C4GXH9</accession>
<organism>
    <name type="scientific">Yersinia pestis bv. Antiqua (strain Nepal516)</name>
    <dbReference type="NCBI Taxonomy" id="377628"/>
    <lineage>
        <taxon>Bacteria</taxon>
        <taxon>Pseudomonadati</taxon>
        <taxon>Pseudomonadota</taxon>
        <taxon>Gammaproteobacteria</taxon>
        <taxon>Enterobacterales</taxon>
        <taxon>Yersiniaceae</taxon>
        <taxon>Yersinia</taxon>
    </lineage>
</organism>
<feature type="chain" id="PRO_0000258896" description="UPF0301 protein YPN_3133">
    <location>
        <begin position="1"/>
        <end position="187"/>
    </location>
</feature>
<name>Y3133_YERPN</name>
<comment type="similarity">
    <text evidence="1">Belongs to the UPF0301 (AlgH) family.</text>
</comment>